<sequence length="443" mass="48528">MKIGIINTKIRTVFSAFACMIAASLVCTMPARAVVEININKGVIEPLPIAITDFLSADQLGSNITSVIAADLERSGLFAPIDKGAFIEKISNPDAAPRFEDWKVINAQALVTGRITKQPDGRLKAEFRLWDTFGGQQMIGQQFFTTPDNWRRVAHIIADAIYERLTGDKGYFDTRVVFVDESGPAQKRVKRLAIMDQDGANVRFISDGRALSLTPRFSPNRQEVTYMSFEGGSPKVYLLQLETGQRELVGNFPGMTIAPRFSPDGQKVVMSLLQDDGSANIYTMDLRNRTTTRLTSSQAIDTGASYSPDGSQIVFTSDRGGRPQLYVMGADGSNPRRISMGDGSYSTPVWSPRGDLIAFTKQSQGQFSIGVMKTDGSGERLLTSGFHNEGPTWAPNGRVLMFFRKAAGAGGPKLFTIDLTGRNERQIQTPNFASDPAWSPLLE</sequence>
<keyword id="KW-0131">Cell cycle</keyword>
<keyword id="KW-0132">Cell division</keyword>
<keyword id="KW-0574">Periplasm</keyword>
<keyword id="KW-0732">Signal</keyword>
<organism>
    <name type="scientific">Brucella abortus (strain S19)</name>
    <dbReference type="NCBI Taxonomy" id="430066"/>
    <lineage>
        <taxon>Bacteria</taxon>
        <taxon>Pseudomonadati</taxon>
        <taxon>Pseudomonadota</taxon>
        <taxon>Alphaproteobacteria</taxon>
        <taxon>Hyphomicrobiales</taxon>
        <taxon>Brucellaceae</taxon>
        <taxon>Brucella/Ochrobactrum group</taxon>
        <taxon>Brucella</taxon>
    </lineage>
</organism>
<proteinExistence type="inferred from homology"/>
<protein>
    <recommendedName>
        <fullName evidence="1">Tol-Pal system protein TolB</fullName>
    </recommendedName>
</protein>
<feature type="signal peptide" evidence="1">
    <location>
        <begin position="1"/>
        <end position="33"/>
    </location>
</feature>
<feature type="chain" id="PRO_1000131517" description="Tol-Pal system protein TolB" evidence="1">
    <location>
        <begin position="34"/>
        <end position="443"/>
    </location>
</feature>
<comment type="function">
    <text evidence="1">Part of the Tol-Pal system, which plays a role in outer membrane invagination during cell division and is important for maintaining outer membrane integrity.</text>
</comment>
<comment type="subunit">
    <text evidence="1">The Tol-Pal system is composed of five core proteins: the inner membrane proteins TolA, TolQ and TolR, the periplasmic protein TolB and the outer membrane protein Pal. They form a network linking the inner and outer membranes and the peptidoglycan layer.</text>
</comment>
<comment type="subcellular location">
    <subcellularLocation>
        <location evidence="1">Periplasm</location>
    </subcellularLocation>
</comment>
<comment type="similarity">
    <text evidence="1">Belongs to the TolB family.</text>
</comment>
<name>TOLB_BRUA1</name>
<gene>
    <name evidence="1" type="primary">tolB</name>
    <name type="ordered locus">BAbS19_I15970</name>
</gene>
<dbReference type="EMBL" id="CP000887">
    <property type="protein sequence ID" value="ACD73081.1"/>
    <property type="molecule type" value="Genomic_DNA"/>
</dbReference>
<dbReference type="RefSeq" id="WP_002964785.1">
    <property type="nucleotide sequence ID" value="NC_010742.1"/>
</dbReference>
<dbReference type="SMR" id="B2S7D4"/>
<dbReference type="GeneID" id="97533149"/>
<dbReference type="KEGG" id="bmc:BAbS19_I15970"/>
<dbReference type="HOGENOM" id="CLU_047123_0_0_5"/>
<dbReference type="Proteomes" id="UP000002565">
    <property type="component" value="Chromosome 1"/>
</dbReference>
<dbReference type="GO" id="GO:0042597">
    <property type="term" value="C:periplasmic space"/>
    <property type="evidence" value="ECO:0007669"/>
    <property type="project" value="UniProtKB-SubCell"/>
</dbReference>
<dbReference type="GO" id="GO:0051301">
    <property type="term" value="P:cell division"/>
    <property type="evidence" value="ECO:0007669"/>
    <property type="project" value="UniProtKB-UniRule"/>
</dbReference>
<dbReference type="GO" id="GO:0017038">
    <property type="term" value="P:protein import"/>
    <property type="evidence" value="ECO:0007669"/>
    <property type="project" value="InterPro"/>
</dbReference>
<dbReference type="Gene3D" id="2.120.10.30">
    <property type="entry name" value="TolB, C-terminal domain"/>
    <property type="match status" value="1"/>
</dbReference>
<dbReference type="Gene3D" id="3.40.50.10070">
    <property type="entry name" value="TolB, N-terminal domain"/>
    <property type="match status" value="1"/>
</dbReference>
<dbReference type="HAMAP" id="MF_00671">
    <property type="entry name" value="TolB"/>
    <property type="match status" value="1"/>
</dbReference>
<dbReference type="InterPro" id="IPR011042">
    <property type="entry name" value="6-blade_b-propeller_TolB-like"/>
</dbReference>
<dbReference type="InterPro" id="IPR011659">
    <property type="entry name" value="PD40"/>
</dbReference>
<dbReference type="InterPro" id="IPR014167">
    <property type="entry name" value="Tol-Pal_TolB"/>
</dbReference>
<dbReference type="InterPro" id="IPR007195">
    <property type="entry name" value="TolB_N"/>
</dbReference>
<dbReference type="NCBIfam" id="TIGR02800">
    <property type="entry name" value="propeller_TolB"/>
    <property type="match status" value="1"/>
</dbReference>
<dbReference type="PANTHER" id="PTHR36842:SF1">
    <property type="entry name" value="PROTEIN TOLB"/>
    <property type="match status" value="1"/>
</dbReference>
<dbReference type="PANTHER" id="PTHR36842">
    <property type="entry name" value="PROTEIN TOLB HOMOLOG"/>
    <property type="match status" value="1"/>
</dbReference>
<dbReference type="Pfam" id="PF07676">
    <property type="entry name" value="PD40"/>
    <property type="match status" value="3"/>
</dbReference>
<dbReference type="Pfam" id="PF04052">
    <property type="entry name" value="TolB_N"/>
    <property type="match status" value="1"/>
</dbReference>
<dbReference type="SUPFAM" id="SSF52964">
    <property type="entry name" value="TolB, N-terminal domain"/>
    <property type="match status" value="1"/>
</dbReference>
<dbReference type="SUPFAM" id="SSF69304">
    <property type="entry name" value="Tricorn protease N-terminal domain"/>
    <property type="match status" value="1"/>
</dbReference>
<reference key="1">
    <citation type="journal article" date="2008" name="PLoS ONE">
        <title>Genome sequence of Brucella abortus vaccine strain S19 compared to virulent strains yields candidate virulence genes.</title>
        <authorList>
            <person name="Crasta O.R."/>
            <person name="Folkerts O."/>
            <person name="Fei Z."/>
            <person name="Mane S.P."/>
            <person name="Evans C."/>
            <person name="Martino-Catt S."/>
            <person name="Bricker B."/>
            <person name="Yu G."/>
            <person name="Du L."/>
            <person name="Sobral B.W."/>
        </authorList>
    </citation>
    <scope>NUCLEOTIDE SEQUENCE [LARGE SCALE GENOMIC DNA]</scope>
    <source>
        <strain>S19</strain>
    </source>
</reference>
<accession>B2S7D4</accession>
<evidence type="ECO:0000255" key="1">
    <source>
        <dbReference type="HAMAP-Rule" id="MF_00671"/>
    </source>
</evidence>